<gene>
    <name evidence="1" type="primary">rplT</name>
    <name type="ordered locus">BMASAVP1_A1536</name>
</gene>
<name>RL20_BURMS</name>
<proteinExistence type="inferred from homology"/>
<dbReference type="EMBL" id="CP000526">
    <property type="protein sequence ID" value="ABM51499.1"/>
    <property type="molecule type" value="Genomic_DNA"/>
</dbReference>
<dbReference type="RefSeq" id="WP_004192938.1">
    <property type="nucleotide sequence ID" value="NC_008785.1"/>
</dbReference>
<dbReference type="SMR" id="A1V3R0"/>
<dbReference type="GeneID" id="98102114"/>
<dbReference type="KEGG" id="bmv:BMASAVP1_A1536"/>
<dbReference type="HOGENOM" id="CLU_123265_0_1_4"/>
<dbReference type="GO" id="GO:1990904">
    <property type="term" value="C:ribonucleoprotein complex"/>
    <property type="evidence" value="ECO:0007669"/>
    <property type="project" value="UniProtKB-KW"/>
</dbReference>
<dbReference type="GO" id="GO:0005840">
    <property type="term" value="C:ribosome"/>
    <property type="evidence" value="ECO:0007669"/>
    <property type="project" value="UniProtKB-KW"/>
</dbReference>
<dbReference type="GO" id="GO:0019843">
    <property type="term" value="F:rRNA binding"/>
    <property type="evidence" value="ECO:0007669"/>
    <property type="project" value="UniProtKB-UniRule"/>
</dbReference>
<dbReference type="GO" id="GO:0003735">
    <property type="term" value="F:structural constituent of ribosome"/>
    <property type="evidence" value="ECO:0007669"/>
    <property type="project" value="InterPro"/>
</dbReference>
<dbReference type="GO" id="GO:0000027">
    <property type="term" value="P:ribosomal large subunit assembly"/>
    <property type="evidence" value="ECO:0007669"/>
    <property type="project" value="UniProtKB-UniRule"/>
</dbReference>
<dbReference type="GO" id="GO:0006412">
    <property type="term" value="P:translation"/>
    <property type="evidence" value="ECO:0007669"/>
    <property type="project" value="InterPro"/>
</dbReference>
<dbReference type="CDD" id="cd07026">
    <property type="entry name" value="Ribosomal_L20"/>
    <property type="match status" value="1"/>
</dbReference>
<dbReference type="FunFam" id="1.10.1900.20:FF:000001">
    <property type="entry name" value="50S ribosomal protein L20"/>
    <property type="match status" value="1"/>
</dbReference>
<dbReference type="Gene3D" id="6.10.160.10">
    <property type="match status" value="1"/>
</dbReference>
<dbReference type="Gene3D" id="1.10.1900.20">
    <property type="entry name" value="Ribosomal protein L20"/>
    <property type="match status" value="1"/>
</dbReference>
<dbReference type="HAMAP" id="MF_00382">
    <property type="entry name" value="Ribosomal_bL20"/>
    <property type="match status" value="1"/>
</dbReference>
<dbReference type="InterPro" id="IPR005813">
    <property type="entry name" value="Ribosomal_bL20"/>
</dbReference>
<dbReference type="InterPro" id="IPR049946">
    <property type="entry name" value="RIBOSOMAL_L20_CS"/>
</dbReference>
<dbReference type="InterPro" id="IPR035566">
    <property type="entry name" value="Ribosomal_protein_bL20_C"/>
</dbReference>
<dbReference type="NCBIfam" id="TIGR01032">
    <property type="entry name" value="rplT_bact"/>
    <property type="match status" value="1"/>
</dbReference>
<dbReference type="PANTHER" id="PTHR10986">
    <property type="entry name" value="39S RIBOSOMAL PROTEIN L20"/>
    <property type="match status" value="1"/>
</dbReference>
<dbReference type="Pfam" id="PF00453">
    <property type="entry name" value="Ribosomal_L20"/>
    <property type="match status" value="1"/>
</dbReference>
<dbReference type="PRINTS" id="PR00062">
    <property type="entry name" value="RIBOSOMALL20"/>
</dbReference>
<dbReference type="SUPFAM" id="SSF74731">
    <property type="entry name" value="Ribosomal protein L20"/>
    <property type="match status" value="1"/>
</dbReference>
<dbReference type="PROSITE" id="PS00937">
    <property type="entry name" value="RIBOSOMAL_L20"/>
    <property type="match status" value="1"/>
</dbReference>
<protein>
    <recommendedName>
        <fullName evidence="1">Large ribosomal subunit protein bL20</fullName>
    </recommendedName>
    <alternativeName>
        <fullName evidence="2">50S ribosomal protein L20</fullName>
    </alternativeName>
</protein>
<feature type="chain" id="PRO_1000048941" description="Large ribosomal subunit protein bL20">
    <location>
        <begin position="1"/>
        <end position="119"/>
    </location>
</feature>
<sequence>MPRVKRGVTARARHKKIINLAKGYRGRRNNVYRIAKQAVMRAGQYAYRDRRNKKRVFRALWITRINAAVRQHDMTYSVFINGLKKASIELDRKVLADMAVFDKAAFAAIVKQVKAAVAA</sequence>
<keyword id="KW-0687">Ribonucleoprotein</keyword>
<keyword id="KW-0689">Ribosomal protein</keyword>
<keyword id="KW-0694">RNA-binding</keyword>
<keyword id="KW-0699">rRNA-binding</keyword>
<accession>A1V3R0</accession>
<reference key="1">
    <citation type="journal article" date="2010" name="Genome Biol. Evol.">
        <title>Continuing evolution of Burkholderia mallei through genome reduction and large-scale rearrangements.</title>
        <authorList>
            <person name="Losada L."/>
            <person name="Ronning C.M."/>
            <person name="DeShazer D."/>
            <person name="Woods D."/>
            <person name="Fedorova N."/>
            <person name="Kim H.S."/>
            <person name="Shabalina S.A."/>
            <person name="Pearson T.R."/>
            <person name="Brinkac L."/>
            <person name="Tan P."/>
            <person name="Nandi T."/>
            <person name="Crabtree J."/>
            <person name="Badger J."/>
            <person name="Beckstrom-Sternberg S."/>
            <person name="Saqib M."/>
            <person name="Schutzer S.E."/>
            <person name="Keim P."/>
            <person name="Nierman W.C."/>
        </authorList>
    </citation>
    <scope>NUCLEOTIDE SEQUENCE [LARGE SCALE GENOMIC DNA]</scope>
    <source>
        <strain>SAVP1</strain>
    </source>
</reference>
<evidence type="ECO:0000255" key="1">
    <source>
        <dbReference type="HAMAP-Rule" id="MF_00382"/>
    </source>
</evidence>
<evidence type="ECO:0000305" key="2"/>
<organism>
    <name type="scientific">Burkholderia mallei (strain SAVP1)</name>
    <dbReference type="NCBI Taxonomy" id="320388"/>
    <lineage>
        <taxon>Bacteria</taxon>
        <taxon>Pseudomonadati</taxon>
        <taxon>Pseudomonadota</taxon>
        <taxon>Betaproteobacteria</taxon>
        <taxon>Burkholderiales</taxon>
        <taxon>Burkholderiaceae</taxon>
        <taxon>Burkholderia</taxon>
        <taxon>pseudomallei group</taxon>
    </lineage>
</organism>
<comment type="function">
    <text evidence="1">Binds directly to 23S ribosomal RNA and is necessary for the in vitro assembly process of the 50S ribosomal subunit. It is not involved in the protein synthesizing functions of that subunit.</text>
</comment>
<comment type="similarity">
    <text evidence="1">Belongs to the bacterial ribosomal protein bL20 family.</text>
</comment>